<dbReference type="EMBL" id="AY122055">
    <property type="protein sequence ID" value="AAM82244.1"/>
    <property type="molecule type" value="Genomic_DNA"/>
</dbReference>
<dbReference type="EMBL" id="AY216720">
    <property type="protein sequence ID" value="AAO85709.1"/>
    <property type="molecule type" value="Genomic_DNA"/>
</dbReference>
<dbReference type="EMBL" id="BX897700">
    <property type="protein sequence ID" value="CAF26529.1"/>
    <property type="molecule type" value="Genomic_DNA"/>
</dbReference>
<dbReference type="RefSeq" id="WP_011179733.1">
    <property type="nucleotide sequence ID" value="NC_005955.1"/>
</dbReference>
<dbReference type="SMR" id="Q6FYW0"/>
<dbReference type="KEGG" id="bqu:BQ10620"/>
<dbReference type="eggNOG" id="COG0630">
    <property type="taxonomic scope" value="Bacteria"/>
</dbReference>
<dbReference type="HOGENOM" id="CLU_005379_3_1_5"/>
<dbReference type="OrthoDB" id="9810761at2"/>
<dbReference type="Proteomes" id="UP000000597">
    <property type="component" value="Chromosome"/>
</dbReference>
<dbReference type="GO" id="GO:0005886">
    <property type="term" value="C:plasma membrane"/>
    <property type="evidence" value="ECO:0007669"/>
    <property type="project" value="UniProtKB-SubCell"/>
</dbReference>
<dbReference type="GO" id="GO:0043684">
    <property type="term" value="C:type IV secretion system complex"/>
    <property type="evidence" value="ECO:0007669"/>
    <property type="project" value="InterPro"/>
</dbReference>
<dbReference type="GO" id="GO:0005524">
    <property type="term" value="F:ATP binding"/>
    <property type="evidence" value="ECO:0007669"/>
    <property type="project" value="UniProtKB-KW"/>
</dbReference>
<dbReference type="GO" id="GO:0016887">
    <property type="term" value="F:ATP hydrolysis activity"/>
    <property type="evidence" value="ECO:0007669"/>
    <property type="project" value="InterPro"/>
</dbReference>
<dbReference type="GO" id="GO:0044097">
    <property type="term" value="P:secretion by the type IV secretion system"/>
    <property type="evidence" value="ECO:0007669"/>
    <property type="project" value="InterPro"/>
</dbReference>
<dbReference type="CDD" id="cd01130">
    <property type="entry name" value="VirB11-like_ATPase"/>
    <property type="match status" value="1"/>
</dbReference>
<dbReference type="Gene3D" id="3.30.450.90">
    <property type="match status" value="1"/>
</dbReference>
<dbReference type="Gene3D" id="3.40.50.300">
    <property type="entry name" value="P-loop containing nucleotide triphosphate hydrolases"/>
    <property type="match status" value="1"/>
</dbReference>
<dbReference type="InterPro" id="IPR003593">
    <property type="entry name" value="AAA+_ATPase"/>
</dbReference>
<dbReference type="InterPro" id="IPR027417">
    <property type="entry name" value="P-loop_NTPase"/>
</dbReference>
<dbReference type="InterPro" id="IPR001482">
    <property type="entry name" value="T2SS/T4SS_dom"/>
</dbReference>
<dbReference type="InterPro" id="IPR050921">
    <property type="entry name" value="T4SS_GSP_E_ATPase"/>
</dbReference>
<dbReference type="InterPro" id="IPR014155">
    <property type="entry name" value="VirB11"/>
</dbReference>
<dbReference type="NCBIfam" id="TIGR02788">
    <property type="entry name" value="VirB11"/>
    <property type="match status" value="1"/>
</dbReference>
<dbReference type="PANTHER" id="PTHR30486">
    <property type="entry name" value="TWITCHING MOTILITY PROTEIN PILT"/>
    <property type="match status" value="1"/>
</dbReference>
<dbReference type="PANTHER" id="PTHR30486:SF6">
    <property type="entry name" value="TYPE IV PILUS RETRACTATION ATPASE PILT"/>
    <property type="match status" value="1"/>
</dbReference>
<dbReference type="Pfam" id="PF00437">
    <property type="entry name" value="T2SSE"/>
    <property type="match status" value="1"/>
</dbReference>
<dbReference type="SMART" id="SM00382">
    <property type="entry name" value="AAA"/>
    <property type="match status" value="1"/>
</dbReference>
<dbReference type="SUPFAM" id="SSF52540">
    <property type="entry name" value="P-loop containing nucleoside triphosphate hydrolases"/>
    <property type="match status" value="1"/>
</dbReference>
<sequence>MNQNLHKLSNETVAIVLTKLEPISAFLKDKSLFEIVINRPYQVMTEGIEGWKTIEAPALSFDELMGIAKVVASYSKQKISDKNPILSATLPGNERIQIVIPPAVEKDTISMTIRKPSSRNFSLEELANKGLFSVCEQVSFTPLNDYQSRFSELKHIEHSLATAYSNKDFVSFLNQAVKCQKNILIAGKTGSGKTTLSKALIAKIPDNERIITIEDTPELVVPQPNYVSMIYSKDGQGLASVGPKELLESALRMRPDRILLQELRDGTAFYYIRNINSGHPGSITTVHASTALAAFEQMTLLVKESEGGGDLERDDIRGLLISMIDIIVQCKRVEGKFKVTEIYYDPFKQRNIFGGN</sequence>
<gene>
    <name type="primary">virB11</name>
    <name type="ordered locus">BQ10620</name>
</gene>
<keyword id="KW-0067">ATP-binding</keyword>
<keyword id="KW-0997">Cell inner membrane</keyword>
<keyword id="KW-1003">Cell membrane</keyword>
<keyword id="KW-0472">Membrane</keyword>
<keyword id="KW-0547">Nucleotide-binding</keyword>
<keyword id="KW-0813">Transport</keyword>
<keyword id="KW-0843">Virulence</keyword>
<evidence type="ECO:0000250" key="1"/>
<evidence type="ECO:0000255" key="2"/>
<evidence type="ECO:0000305" key="3"/>
<name>VIRBB_BARQU</name>
<accession>Q6FYW0</accession>
<accession>Q4L2Q2</accession>
<accession>Q84BW3</accession>
<reference key="1">
    <citation type="submission" date="2002-06" db="EMBL/GenBank/DDBJ databases">
        <title>Evolution of type IV secretion systems in Bartonella: horizontal transmission and gene conversion.</title>
        <authorList>
            <person name="Alsmark U.C.M."/>
            <person name="Frank A.C."/>
            <person name="Thollesson M."/>
            <person name="Andersson S.G.E."/>
        </authorList>
    </citation>
    <scope>NUCLEOTIDE SEQUENCE [GENOMIC DNA]</scope>
    <source>
        <strain>Toulouse</strain>
    </source>
</reference>
<reference key="2">
    <citation type="submission" date="2003-01" db="EMBL/GenBank/DDBJ databases">
        <title>Genes composing the virB operon of Bartonella quintana.</title>
        <authorList>
            <person name="Kohlhorst D.E."/>
            <person name="Soni T."/>
            <person name="Baumstark B.R."/>
        </authorList>
    </citation>
    <scope>NUCLEOTIDE SEQUENCE [GENOMIC DNA]</scope>
    <source>
        <strain>ATCC VR-358 / Fuller / CIP 107027</strain>
    </source>
</reference>
<reference key="3">
    <citation type="journal article" date="2004" name="Proc. Natl. Acad. Sci. U.S.A.">
        <title>The louse-borne human pathogen Bartonella quintana is a genomic derivative of the zoonotic agent Bartonella henselae.</title>
        <authorList>
            <person name="Alsmark U.C.M."/>
            <person name="Frank A.C."/>
            <person name="Karlberg E.O."/>
            <person name="Legault B.-A."/>
            <person name="Ardell D.H."/>
            <person name="Canbaeck B."/>
            <person name="Eriksson A.-S."/>
            <person name="Naeslund A.K."/>
            <person name="Handley S.A."/>
            <person name="Huvet M."/>
            <person name="La Scola B."/>
            <person name="Holmberg M."/>
            <person name="Andersson S.G.E."/>
        </authorList>
    </citation>
    <scope>NUCLEOTIDE SEQUENCE [LARGE SCALE GENOMIC DNA]</scope>
    <scope>POSSIBLE FUNCTION</scope>
    <source>
        <strain>Toulouse</strain>
    </source>
</reference>
<protein>
    <recommendedName>
        <fullName>Type IV secretion system protein VirB11</fullName>
    </recommendedName>
</protein>
<feature type="chain" id="PRO_0000281580" description="Type IV secretion system protein VirB11">
    <location>
        <begin position="1"/>
        <end position="356"/>
    </location>
</feature>
<feature type="binding site" evidence="2">
    <location>
        <begin position="187"/>
        <end position="194"/>
    </location>
    <ligand>
        <name>ATP</name>
        <dbReference type="ChEBI" id="CHEBI:30616"/>
    </ligand>
</feature>
<feature type="sequence variant" description="In strain: ATCC VR-358 / Fuller / CIP 107027.">
    <original>R</original>
    <variation>S</variation>
    <location>
        <position position="39"/>
    </location>
</feature>
<feature type="sequence variant" description="In strain: ATCC VR-358 / Fuller / CIP 107027.">
    <original>T</original>
    <variation>P</variation>
    <location>
        <position position="53"/>
    </location>
</feature>
<feature type="sequence variant" description="In strain: ATCC VR-358 / Fuller / CIP 107027.">
    <original>T</original>
    <variation>P</variation>
    <location>
        <position position="195"/>
    </location>
</feature>
<feature type="sequence variant" description="In strain: ATCC VR-358 / Fuller / CIP 107027.">
    <location>
        <position position="314"/>
    </location>
</feature>
<feature type="sequence variant" description="In strain: ATCC VR-358 / Fuller /CIP 107027.">
    <original>NIFGGN</original>
    <variation>HLEDLP</variation>
    <location>
        <begin position="351"/>
        <end position="356"/>
    </location>
</feature>
<proteinExistence type="inferred from homology"/>
<organism>
    <name type="scientific">Bartonella quintana (strain Toulouse)</name>
    <name type="common">Rochalimaea quintana</name>
    <dbReference type="NCBI Taxonomy" id="283165"/>
    <lineage>
        <taxon>Bacteria</taxon>
        <taxon>Pseudomonadati</taxon>
        <taxon>Pseudomonadota</taxon>
        <taxon>Alphaproteobacteria</taxon>
        <taxon>Hyphomicrobiales</taxon>
        <taxon>Bartonellaceae</taxon>
        <taxon>Bartonella</taxon>
    </lineage>
</organism>
<comment type="function">
    <text>Component of the type IV secretion system VirB/VirD4 which could be a major virulence determinant for subversion of human endothelial cell (HEC) function. Altogether with VirB4, may be implicated in providing the energy, via hydrolysis of ATP, for the assembly of secretion system and substrate transport.</text>
</comment>
<comment type="subunit">
    <text evidence="1">Interacts with VirB9.</text>
</comment>
<comment type="subcellular location">
    <subcellularLocation>
        <location evidence="3">Cell inner membrane</location>
    </subcellularLocation>
</comment>
<comment type="similarity">
    <text evidence="3">Belongs to the GSP E family.</text>
</comment>